<comment type="function">
    <text evidence="3">May have cytolytic and antimicrobial activity.</text>
</comment>
<comment type="subcellular location">
    <subcellularLocation>
        <location evidence="1">Secreted</location>
    </subcellularLocation>
</comment>
<comment type="tissue specificity">
    <text evidence="4">Expressed by the venom gland.</text>
</comment>
<comment type="mass spectrometry">
    <text>Monoisotopic mass.</text>
</comment>
<accession>C0HLG1</accession>
<feature type="chain" id="PRO_0000446060" description="Oxyopinin-3c">
    <location>
        <begin position="1"/>
        <end position="25"/>
    </location>
</feature>
<proteinExistence type="evidence at protein level"/>
<reference evidence="3" key="1">
    <citation type="submission" date="2018-10" db="UniProtKB">
        <authorList>
            <person name="Vassilevski A."/>
            <person name="Kozlov S."/>
            <person name="Grishin E."/>
        </authorList>
    </citation>
    <scope>PROTEIN SEQUENCE</scope>
    <scope>SUBCELLULAR LOCATION</scope>
    <scope>MASS SPECTROMETRY</scope>
</reference>
<protein>
    <recommendedName>
        <fullName evidence="2">Oxyopinin-3c</fullName>
        <shortName evidence="2">Oxt-3c</shortName>
    </recommendedName>
</protein>
<organism>
    <name type="scientific">Oxyopes takobius</name>
    <name type="common">Lynx spider</name>
    <name type="synonym">Oxyopes foliiformis</name>
    <dbReference type="NCBI Taxonomy" id="666126"/>
    <lineage>
        <taxon>Eukaryota</taxon>
        <taxon>Metazoa</taxon>
        <taxon>Ecdysozoa</taxon>
        <taxon>Arthropoda</taxon>
        <taxon>Chelicerata</taxon>
        <taxon>Arachnida</taxon>
        <taxon>Araneae</taxon>
        <taxon>Araneomorphae</taxon>
        <taxon>Entelegynae</taxon>
        <taxon>Lycosoidea</taxon>
        <taxon>Oxyopidae</taxon>
        <taxon>Oxyopes</taxon>
    </lineage>
</organism>
<keyword id="KW-0929">Antimicrobial</keyword>
<keyword id="KW-0204">Cytolysis</keyword>
<keyword id="KW-0903">Direct protein sequencing</keyword>
<keyword id="KW-0964">Secreted</keyword>
<keyword id="KW-0800">Toxin</keyword>
<evidence type="ECO:0000269" key="1">
    <source ref="1"/>
</evidence>
<evidence type="ECO:0000303" key="2">
    <source ref="1"/>
</evidence>
<evidence type="ECO:0000305" key="3"/>
<evidence type="ECO:0000305" key="4">
    <source ref="1"/>
</evidence>
<name>TOP3C_OXYTA</name>
<dbReference type="GO" id="GO:0005576">
    <property type="term" value="C:extracellular region"/>
    <property type="evidence" value="ECO:0007669"/>
    <property type="project" value="UniProtKB-SubCell"/>
</dbReference>
<dbReference type="GO" id="GO:0090729">
    <property type="term" value="F:toxin activity"/>
    <property type="evidence" value="ECO:0007669"/>
    <property type="project" value="UniProtKB-KW"/>
</dbReference>
<dbReference type="GO" id="GO:0031640">
    <property type="term" value="P:killing of cells of another organism"/>
    <property type="evidence" value="ECO:0007669"/>
    <property type="project" value="UniProtKB-KW"/>
</dbReference>
<sequence>GMKDYFKKLLQKVIKKIKSFRKKQD</sequence>